<proteinExistence type="inferred from homology"/>
<comment type="function">
    <text evidence="1">One of the proteins required for the normal export of preproteins out of the cell cytoplasm. It is a molecular chaperone that binds to a subset of precursor proteins, maintaining them in a translocation-competent state. It also specifically binds to its receptor SecA.</text>
</comment>
<comment type="subunit">
    <text evidence="1">Homotetramer, a dimer of dimers. One homotetramer interacts with 1 SecA dimer.</text>
</comment>
<comment type="subcellular location">
    <subcellularLocation>
        <location evidence="1">Cytoplasm</location>
    </subcellularLocation>
</comment>
<comment type="similarity">
    <text evidence="1">Belongs to the SecB family.</text>
</comment>
<evidence type="ECO:0000255" key="1">
    <source>
        <dbReference type="HAMAP-Rule" id="MF_00821"/>
    </source>
</evidence>
<evidence type="ECO:0000256" key="2">
    <source>
        <dbReference type="SAM" id="MobiDB-lite"/>
    </source>
</evidence>
<organism>
    <name type="scientific">Neorickettsia sennetsu (strain ATCC VR-367 / Miyayama)</name>
    <name type="common">Ehrlichia sennetsu</name>
    <dbReference type="NCBI Taxonomy" id="222891"/>
    <lineage>
        <taxon>Bacteria</taxon>
        <taxon>Pseudomonadati</taxon>
        <taxon>Pseudomonadota</taxon>
        <taxon>Alphaproteobacteria</taxon>
        <taxon>Rickettsiales</taxon>
        <taxon>Anaplasmataceae</taxon>
        <taxon>Neorickettsia</taxon>
    </lineage>
</organism>
<reference key="1">
    <citation type="journal article" date="2006" name="PLoS Genet.">
        <title>Comparative genomics of emerging human ehrlichiosis agents.</title>
        <authorList>
            <person name="Dunning Hotopp J.C."/>
            <person name="Lin M."/>
            <person name="Madupu R."/>
            <person name="Crabtree J."/>
            <person name="Angiuoli S.V."/>
            <person name="Eisen J.A."/>
            <person name="Seshadri R."/>
            <person name="Ren Q."/>
            <person name="Wu M."/>
            <person name="Utterback T.R."/>
            <person name="Smith S."/>
            <person name="Lewis M."/>
            <person name="Khouri H."/>
            <person name="Zhang C."/>
            <person name="Niu H."/>
            <person name="Lin Q."/>
            <person name="Ohashi N."/>
            <person name="Zhi N."/>
            <person name="Nelson W.C."/>
            <person name="Brinkac L.M."/>
            <person name="Dodson R.J."/>
            <person name="Rosovitz M.J."/>
            <person name="Sundaram J.P."/>
            <person name="Daugherty S.C."/>
            <person name="Davidsen T."/>
            <person name="Durkin A.S."/>
            <person name="Gwinn M.L."/>
            <person name="Haft D.H."/>
            <person name="Selengut J.D."/>
            <person name="Sullivan S.A."/>
            <person name="Zafar N."/>
            <person name="Zhou L."/>
            <person name="Benahmed F."/>
            <person name="Forberger H."/>
            <person name="Halpin R."/>
            <person name="Mulligan S."/>
            <person name="Robinson J."/>
            <person name="White O."/>
            <person name="Rikihisa Y."/>
            <person name="Tettelin H."/>
        </authorList>
    </citation>
    <scope>NUCLEOTIDE SEQUENCE [LARGE SCALE GENOMIC DNA]</scope>
    <source>
        <strain>ATCC VR-367 / Miyayama</strain>
    </source>
</reference>
<gene>
    <name evidence="1" type="primary">secB</name>
    <name type="ordered locus">NSE_0359</name>
</gene>
<sequence length="164" mass="18473">MPDKDEITHDAQSENEESLPLARPEGQFMKSIALDTPNSPEVFSIMKNPPEVDVQCNIDSRAIDERNGVYEVVLDLKTEARIKDKDSPDETRVAFVCKLKYCGVFTIKNLTQEQLRQTLLVEAPTLLFPFARRIIATATTDAGFPPLMLAPINFAQKYAESQRD</sequence>
<protein>
    <recommendedName>
        <fullName evidence="1">Protein-export protein SecB</fullName>
    </recommendedName>
</protein>
<feature type="chain" id="PRO_0000318248" description="Protein-export protein SecB">
    <location>
        <begin position="1"/>
        <end position="164"/>
    </location>
</feature>
<feature type="region of interest" description="Disordered" evidence="2">
    <location>
        <begin position="1"/>
        <end position="22"/>
    </location>
</feature>
<feature type="compositionally biased region" description="Basic and acidic residues" evidence="2">
    <location>
        <begin position="1"/>
        <end position="12"/>
    </location>
</feature>
<keyword id="KW-0143">Chaperone</keyword>
<keyword id="KW-0963">Cytoplasm</keyword>
<keyword id="KW-0653">Protein transport</keyword>
<keyword id="KW-0811">Translocation</keyword>
<keyword id="KW-0813">Transport</keyword>
<dbReference type="EMBL" id="CP000237">
    <property type="protein sequence ID" value="ABD46350.1"/>
    <property type="molecule type" value="Genomic_DNA"/>
</dbReference>
<dbReference type="RefSeq" id="WP_011451754.1">
    <property type="nucleotide sequence ID" value="NC_007798.1"/>
</dbReference>
<dbReference type="SMR" id="Q2GE48"/>
<dbReference type="STRING" id="222891.NSE_0359"/>
<dbReference type="KEGG" id="nse:NSE_0359"/>
<dbReference type="eggNOG" id="COG1952">
    <property type="taxonomic scope" value="Bacteria"/>
</dbReference>
<dbReference type="HOGENOM" id="CLU_111574_1_0_5"/>
<dbReference type="OrthoDB" id="9795145at2"/>
<dbReference type="Proteomes" id="UP000001942">
    <property type="component" value="Chromosome"/>
</dbReference>
<dbReference type="GO" id="GO:0005737">
    <property type="term" value="C:cytoplasm"/>
    <property type="evidence" value="ECO:0007669"/>
    <property type="project" value="UniProtKB-SubCell"/>
</dbReference>
<dbReference type="GO" id="GO:0051082">
    <property type="term" value="F:unfolded protein binding"/>
    <property type="evidence" value="ECO:0007669"/>
    <property type="project" value="InterPro"/>
</dbReference>
<dbReference type="GO" id="GO:0006457">
    <property type="term" value="P:protein folding"/>
    <property type="evidence" value="ECO:0007669"/>
    <property type="project" value="UniProtKB-UniRule"/>
</dbReference>
<dbReference type="GO" id="GO:0051262">
    <property type="term" value="P:protein tetramerization"/>
    <property type="evidence" value="ECO:0007669"/>
    <property type="project" value="InterPro"/>
</dbReference>
<dbReference type="GO" id="GO:0015031">
    <property type="term" value="P:protein transport"/>
    <property type="evidence" value="ECO:0007669"/>
    <property type="project" value="UniProtKB-UniRule"/>
</dbReference>
<dbReference type="Gene3D" id="3.10.420.10">
    <property type="entry name" value="SecB-like"/>
    <property type="match status" value="1"/>
</dbReference>
<dbReference type="HAMAP" id="MF_00821">
    <property type="entry name" value="SecB"/>
    <property type="match status" value="1"/>
</dbReference>
<dbReference type="InterPro" id="IPR003708">
    <property type="entry name" value="SecB"/>
</dbReference>
<dbReference type="InterPro" id="IPR035958">
    <property type="entry name" value="SecB-like_sf"/>
</dbReference>
<dbReference type="NCBIfam" id="NF004392">
    <property type="entry name" value="PRK05751.1-3"/>
    <property type="match status" value="1"/>
</dbReference>
<dbReference type="NCBIfam" id="TIGR00809">
    <property type="entry name" value="secB"/>
    <property type="match status" value="1"/>
</dbReference>
<dbReference type="PANTHER" id="PTHR36918">
    <property type="match status" value="1"/>
</dbReference>
<dbReference type="PANTHER" id="PTHR36918:SF1">
    <property type="entry name" value="PROTEIN-EXPORT PROTEIN SECB"/>
    <property type="match status" value="1"/>
</dbReference>
<dbReference type="Pfam" id="PF02556">
    <property type="entry name" value="SecB"/>
    <property type="match status" value="1"/>
</dbReference>
<dbReference type="PRINTS" id="PR01594">
    <property type="entry name" value="SECBCHAPRONE"/>
</dbReference>
<dbReference type="SUPFAM" id="SSF54611">
    <property type="entry name" value="SecB-like"/>
    <property type="match status" value="1"/>
</dbReference>
<name>SECB_NEOSM</name>
<accession>Q2GE48</accession>